<sequence>MSNRVIIFDTTLRDGEQALAASLSVKEKLQIAMALERLGVDVMEVGFPVSSPGDFESVQTIARTIKNSRVCALSRALEKDIDAAAQALSVAEQFRIHTFISTSTIHVESKLKRSFEQVLEMAVGAVKYARRFTDDVEFSCEDAGRTPIDNLCRMVEAAIHAGARTINIPDTVGYTVPSEFGGIIQTLFNRVPNIDQAIISVHCHDDLGMSVANSITAVQHGARQIECTMNGIGERAGNCSLEEIAMILATRKNLLGVETGINAKEIHRTSNLVSQLCNMPIQSNKAIVGANAFTHSSGIHQDGMLKAQNTYEIMTPESIGLNRNNLNMTSRSGRHVIKHRMEEMGYSEQDFNLDALYEQFLHLADKKGQVFDYDLEALAFMEAQAAEDNFYQLQQLVVQSDSTEGVATATVRIDVGGEIKTEAATGNGPVDAAYNAIARATDRRIDIISYKLGAKGEGQNALGQVDITAVYHEQNFHGVGLATDVVEASARALVHVMNLTCRADKVADYKQNMHKNRELGGV</sequence>
<dbReference type="EC" id="2.3.3.13" evidence="1"/>
<dbReference type="EMBL" id="CP000469">
    <property type="protein sequence ID" value="ABK49979.1"/>
    <property type="molecule type" value="Genomic_DNA"/>
</dbReference>
<dbReference type="RefSeq" id="WP_011718510.1">
    <property type="nucleotide sequence ID" value="NC_008577.1"/>
</dbReference>
<dbReference type="SMR" id="A0L1R0"/>
<dbReference type="STRING" id="94122.Shewana3_3761"/>
<dbReference type="KEGG" id="shn:Shewana3_3761"/>
<dbReference type="eggNOG" id="COG0119">
    <property type="taxonomic scope" value="Bacteria"/>
</dbReference>
<dbReference type="HOGENOM" id="CLU_022158_0_1_6"/>
<dbReference type="OrthoDB" id="9803573at2"/>
<dbReference type="UniPathway" id="UPA00048">
    <property type="reaction ID" value="UER00070"/>
</dbReference>
<dbReference type="Proteomes" id="UP000002589">
    <property type="component" value="Chromosome"/>
</dbReference>
<dbReference type="GO" id="GO:0005829">
    <property type="term" value="C:cytosol"/>
    <property type="evidence" value="ECO:0007669"/>
    <property type="project" value="TreeGrafter"/>
</dbReference>
<dbReference type="GO" id="GO:0003852">
    <property type="term" value="F:2-isopropylmalate synthase activity"/>
    <property type="evidence" value="ECO:0007669"/>
    <property type="project" value="UniProtKB-UniRule"/>
</dbReference>
<dbReference type="GO" id="GO:0003985">
    <property type="term" value="F:acetyl-CoA C-acetyltransferase activity"/>
    <property type="evidence" value="ECO:0007669"/>
    <property type="project" value="UniProtKB-UniRule"/>
</dbReference>
<dbReference type="GO" id="GO:0030145">
    <property type="term" value="F:manganese ion binding"/>
    <property type="evidence" value="ECO:0007669"/>
    <property type="project" value="UniProtKB-UniRule"/>
</dbReference>
<dbReference type="GO" id="GO:0009098">
    <property type="term" value="P:L-leucine biosynthetic process"/>
    <property type="evidence" value="ECO:0007669"/>
    <property type="project" value="UniProtKB-UniRule"/>
</dbReference>
<dbReference type="CDD" id="cd07940">
    <property type="entry name" value="DRE_TIM_IPMS"/>
    <property type="match status" value="1"/>
</dbReference>
<dbReference type="FunFam" id="1.10.238.260:FF:000001">
    <property type="entry name" value="2-isopropylmalate synthase"/>
    <property type="match status" value="1"/>
</dbReference>
<dbReference type="FunFam" id="3.20.20.70:FF:000010">
    <property type="entry name" value="2-isopropylmalate synthase"/>
    <property type="match status" value="1"/>
</dbReference>
<dbReference type="FunFam" id="3.30.160.270:FF:000001">
    <property type="entry name" value="2-isopropylmalate synthase"/>
    <property type="match status" value="1"/>
</dbReference>
<dbReference type="Gene3D" id="1.10.238.260">
    <property type="match status" value="1"/>
</dbReference>
<dbReference type="Gene3D" id="3.30.160.270">
    <property type="match status" value="1"/>
</dbReference>
<dbReference type="Gene3D" id="3.20.20.70">
    <property type="entry name" value="Aldolase class I"/>
    <property type="match status" value="1"/>
</dbReference>
<dbReference type="HAMAP" id="MF_01025">
    <property type="entry name" value="LeuA_type1"/>
    <property type="match status" value="1"/>
</dbReference>
<dbReference type="InterPro" id="IPR050073">
    <property type="entry name" value="2-IPM_HCS-like"/>
</dbReference>
<dbReference type="InterPro" id="IPR013709">
    <property type="entry name" value="2-isopropylmalate_synth_dimer"/>
</dbReference>
<dbReference type="InterPro" id="IPR002034">
    <property type="entry name" value="AIPM/Hcit_synth_CS"/>
</dbReference>
<dbReference type="InterPro" id="IPR013785">
    <property type="entry name" value="Aldolase_TIM"/>
</dbReference>
<dbReference type="InterPro" id="IPR054691">
    <property type="entry name" value="LeuA/HCS_post-cat"/>
</dbReference>
<dbReference type="InterPro" id="IPR036230">
    <property type="entry name" value="LeuA_allosteric_dom_sf"/>
</dbReference>
<dbReference type="InterPro" id="IPR005671">
    <property type="entry name" value="LeuA_bact_synth"/>
</dbReference>
<dbReference type="InterPro" id="IPR000891">
    <property type="entry name" value="PYR_CT"/>
</dbReference>
<dbReference type="NCBIfam" id="TIGR00973">
    <property type="entry name" value="leuA_bact"/>
    <property type="match status" value="1"/>
</dbReference>
<dbReference type="NCBIfam" id="NF002084">
    <property type="entry name" value="PRK00915.1-1"/>
    <property type="match status" value="1"/>
</dbReference>
<dbReference type="NCBIfam" id="NF002086">
    <property type="entry name" value="PRK00915.1-3"/>
    <property type="match status" value="1"/>
</dbReference>
<dbReference type="PANTHER" id="PTHR10277:SF9">
    <property type="entry name" value="2-ISOPROPYLMALATE SYNTHASE 1, CHLOROPLASTIC-RELATED"/>
    <property type="match status" value="1"/>
</dbReference>
<dbReference type="PANTHER" id="PTHR10277">
    <property type="entry name" value="HOMOCITRATE SYNTHASE-RELATED"/>
    <property type="match status" value="1"/>
</dbReference>
<dbReference type="Pfam" id="PF22617">
    <property type="entry name" value="HCS_D2"/>
    <property type="match status" value="1"/>
</dbReference>
<dbReference type="Pfam" id="PF00682">
    <property type="entry name" value="HMGL-like"/>
    <property type="match status" value="1"/>
</dbReference>
<dbReference type="Pfam" id="PF08502">
    <property type="entry name" value="LeuA_dimer"/>
    <property type="match status" value="1"/>
</dbReference>
<dbReference type="SMART" id="SM00917">
    <property type="entry name" value="LeuA_dimer"/>
    <property type="match status" value="1"/>
</dbReference>
<dbReference type="SUPFAM" id="SSF110921">
    <property type="entry name" value="2-isopropylmalate synthase LeuA, allosteric (dimerisation) domain"/>
    <property type="match status" value="1"/>
</dbReference>
<dbReference type="SUPFAM" id="SSF51569">
    <property type="entry name" value="Aldolase"/>
    <property type="match status" value="1"/>
</dbReference>
<dbReference type="PROSITE" id="PS00815">
    <property type="entry name" value="AIPM_HOMOCIT_SYNTH_1"/>
    <property type="match status" value="1"/>
</dbReference>
<dbReference type="PROSITE" id="PS00816">
    <property type="entry name" value="AIPM_HOMOCIT_SYNTH_2"/>
    <property type="match status" value="1"/>
</dbReference>
<dbReference type="PROSITE" id="PS50991">
    <property type="entry name" value="PYR_CT"/>
    <property type="match status" value="1"/>
</dbReference>
<accession>A0L1R0</accession>
<organism>
    <name type="scientific">Shewanella sp. (strain ANA-3)</name>
    <dbReference type="NCBI Taxonomy" id="94122"/>
    <lineage>
        <taxon>Bacteria</taxon>
        <taxon>Pseudomonadati</taxon>
        <taxon>Pseudomonadota</taxon>
        <taxon>Gammaproteobacteria</taxon>
        <taxon>Alteromonadales</taxon>
        <taxon>Shewanellaceae</taxon>
        <taxon>Shewanella</taxon>
    </lineage>
</organism>
<evidence type="ECO:0000255" key="1">
    <source>
        <dbReference type="HAMAP-Rule" id="MF_01025"/>
    </source>
</evidence>
<proteinExistence type="inferred from homology"/>
<keyword id="KW-0028">Amino-acid biosynthesis</keyword>
<keyword id="KW-0100">Branched-chain amino acid biosynthesis</keyword>
<keyword id="KW-0963">Cytoplasm</keyword>
<keyword id="KW-0432">Leucine biosynthesis</keyword>
<keyword id="KW-0464">Manganese</keyword>
<keyword id="KW-0479">Metal-binding</keyword>
<keyword id="KW-0808">Transferase</keyword>
<comment type="function">
    <text evidence="1">Catalyzes the condensation of the acetyl group of acetyl-CoA with 3-methyl-2-oxobutanoate (2-ketoisovalerate) to form 3-carboxy-3-hydroxy-4-methylpentanoate (2-isopropylmalate).</text>
</comment>
<comment type="catalytic activity">
    <reaction evidence="1">
        <text>3-methyl-2-oxobutanoate + acetyl-CoA + H2O = (2S)-2-isopropylmalate + CoA + H(+)</text>
        <dbReference type="Rhea" id="RHEA:21524"/>
        <dbReference type="ChEBI" id="CHEBI:1178"/>
        <dbReference type="ChEBI" id="CHEBI:11851"/>
        <dbReference type="ChEBI" id="CHEBI:15377"/>
        <dbReference type="ChEBI" id="CHEBI:15378"/>
        <dbReference type="ChEBI" id="CHEBI:57287"/>
        <dbReference type="ChEBI" id="CHEBI:57288"/>
        <dbReference type="EC" id="2.3.3.13"/>
    </reaction>
</comment>
<comment type="cofactor">
    <cofactor evidence="1">
        <name>Mn(2+)</name>
        <dbReference type="ChEBI" id="CHEBI:29035"/>
    </cofactor>
</comment>
<comment type="pathway">
    <text evidence="1">Amino-acid biosynthesis; L-leucine biosynthesis; L-leucine from 3-methyl-2-oxobutanoate: step 1/4.</text>
</comment>
<comment type="subunit">
    <text evidence="1">Homodimer.</text>
</comment>
<comment type="subcellular location">
    <subcellularLocation>
        <location evidence="1">Cytoplasm</location>
    </subcellularLocation>
</comment>
<comment type="similarity">
    <text evidence="1">Belongs to the alpha-IPM synthase/homocitrate synthase family. LeuA type 1 subfamily.</text>
</comment>
<reference key="1">
    <citation type="submission" date="2006-09" db="EMBL/GenBank/DDBJ databases">
        <title>Complete sequence of chromosome 1 of Shewanella sp. ANA-3.</title>
        <authorList>
            <person name="Copeland A."/>
            <person name="Lucas S."/>
            <person name="Lapidus A."/>
            <person name="Barry K."/>
            <person name="Detter J.C."/>
            <person name="Glavina del Rio T."/>
            <person name="Hammon N."/>
            <person name="Israni S."/>
            <person name="Dalin E."/>
            <person name="Tice H."/>
            <person name="Pitluck S."/>
            <person name="Chertkov O."/>
            <person name="Brettin T."/>
            <person name="Bruce D."/>
            <person name="Han C."/>
            <person name="Tapia R."/>
            <person name="Gilna P."/>
            <person name="Schmutz J."/>
            <person name="Larimer F."/>
            <person name="Land M."/>
            <person name="Hauser L."/>
            <person name="Kyrpides N."/>
            <person name="Kim E."/>
            <person name="Newman D."/>
            <person name="Salticov C."/>
            <person name="Konstantinidis K."/>
            <person name="Klappenback J."/>
            <person name="Tiedje J."/>
            <person name="Richardson P."/>
        </authorList>
    </citation>
    <scope>NUCLEOTIDE SEQUENCE [LARGE SCALE GENOMIC DNA]</scope>
    <source>
        <strain>ANA-3</strain>
    </source>
</reference>
<gene>
    <name evidence="1" type="primary">leuA</name>
    <name type="ordered locus">Shewana3_3761</name>
</gene>
<protein>
    <recommendedName>
        <fullName evidence="1">2-isopropylmalate synthase</fullName>
        <ecNumber evidence="1">2.3.3.13</ecNumber>
    </recommendedName>
    <alternativeName>
        <fullName evidence="1">Alpha-IPM synthase</fullName>
    </alternativeName>
    <alternativeName>
        <fullName evidence="1">Alpha-isopropylmalate synthase</fullName>
    </alternativeName>
</protein>
<name>LEU1_SHESA</name>
<feature type="chain" id="PRO_1000149289" description="2-isopropylmalate synthase">
    <location>
        <begin position="1"/>
        <end position="522"/>
    </location>
</feature>
<feature type="domain" description="Pyruvate carboxyltransferase" evidence="1">
    <location>
        <begin position="5"/>
        <end position="267"/>
    </location>
</feature>
<feature type="region of interest" description="Regulatory domain" evidence="1">
    <location>
        <begin position="392"/>
        <end position="522"/>
    </location>
</feature>
<feature type="binding site" evidence="1">
    <location>
        <position position="14"/>
    </location>
    <ligand>
        <name>Mn(2+)</name>
        <dbReference type="ChEBI" id="CHEBI:29035"/>
    </ligand>
</feature>
<feature type="binding site" evidence="1">
    <location>
        <position position="202"/>
    </location>
    <ligand>
        <name>Mn(2+)</name>
        <dbReference type="ChEBI" id="CHEBI:29035"/>
    </ligand>
</feature>
<feature type="binding site" evidence="1">
    <location>
        <position position="204"/>
    </location>
    <ligand>
        <name>Mn(2+)</name>
        <dbReference type="ChEBI" id="CHEBI:29035"/>
    </ligand>
</feature>
<feature type="binding site" evidence="1">
    <location>
        <position position="238"/>
    </location>
    <ligand>
        <name>Mn(2+)</name>
        <dbReference type="ChEBI" id="CHEBI:29035"/>
    </ligand>
</feature>